<evidence type="ECO:0000255" key="1">
    <source>
        <dbReference type="HAMAP-Rule" id="MF_00147"/>
    </source>
</evidence>
<dbReference type="EC" id="5.3.1.1" evidence="1"/>
<dbReference type="EMBL" id="AE015451">
    <property type="protein sequence ID" value="AAN70287.1"/>
    <property type="molecule type" value="Genomic_DNA"/>
</dbReference>
<dbReference type="RefSeq" id="NP_746823.1">
    <property type="nucleotide sequence ID" value="NC_002947.4"/>
</dbReference>
<dbReference type="RefSeq" id="WP_003249956.1">
    <property type="nucleotide sequence ID" value="NZ_CP169744.1"/>
</dbReference>
<dbReference type="SMR" id="Q88DV4"/>
<dbReference type="STRING" id="160488.PP_4715"/>
<dbReference type="PaxDb" id="160488-PP_4715"/>
<dbReference type="GeneID" id="83682432"/>
<dbReference type="KEGG" id="ppu:PP_4715"/>
<dbReference type="PATRIC" id="fig|160488.4.peg.5026"/>
<dbReference type="eggNOG" id="COG0149">
    <property type="taxonomic scope" value="Bacteria"/>
</dbReference>
<dbReference type="HOGENOM" id="CLU_024251_2_1_6"/>
<dbReference type="OrthoDB" id="9809429at2"/>
<dbReference type="PhylomeDB" id="Q88DV4"/>
<dbReference type="BioCyc" id="PPUT160488:G1G01-5041-MONOMER"/>
<dbReference type="UniPathway" id="UPA00109">
    <property type="reaction ID" value="UER00189"/>
</dbReference>
<dbReference type="UniPathway" id="UPA00138"/>
<dbReference type="Proteomes" id="UP000000556">
    <property type="component" value="Chromosome"/>
</dbReference>
<dbReference type="GO" id="GO:0005829">
    <property type="term" value="C:cytosol"/>
    <property type="evidence" value="ECO:0007669"/>
    <property type="project" value="TreeGrafter"/>
</dbReference>
<dbReference type="GO" id="GO:0004807">
    <property type="term" value="F:triose-phosphate isomerase activity"/>
    <property type="evidence" value="ECO:0007669"/>
    <property type="project" value="UniProtKB-UniRule"/>
</dbReference>
<dbReference type="GO" id="GO:0006094">
    <property type="term" value="P:gluconeogenesis"/>
    <property type="evidence" value="ECO:0007669"/>
    <property type="project" value="UniProtKB-UniRule"/>
</dbReference>
<dbReference type="GO" id="GO:0046166">
    <property type="term" value="P:glyceraldehyde-3-phosphate biosynthetic process"/>
    <property type="evidence" value="ECO:0007669"/>
    <property type="project" value="TreeGrafter"/>
</dbReference>
<dbReference type="GO" id="GO:0019563">
    <property type="term" value="P:glycerol catabolic process"/>
    <property type="evidence" value="ECO:0007669"/>
    <property type="project" value="TreeGrafter"/>
</dbReference>
<dbReference type="GO" id="GO:0006096">
    <property type="term" value="P:glycolytic process"/>
    <property type="evidence" value="ECO:0007669"/>
    <property type="project" value="UniProtKB-UniRule"/>
</dbReference>
<dbReference type="CDD" id="cd00311">
    <property type="entry name" value="TIM"/>
    <property type="match status" value="1"/>
</dbReference>
<dbReference type="FunFam" id="3.20.20.70:FF:000016">
    <property type="entry name" value="Triosephosphate isomerase"/>
    <property type="match status" value="1"/>
</dbReference>
<dbReference type="Gene3D" id="3.20.20.70">
    <property type="entry name" value="Aldolase class I"/>
    <property type="match status" value="1"/>
</dbReference>
<dbReference type="HAMAP" id="MF_00147_B">
    <property type="entry name" value="TIM_B"/>
    <property type="match status" value="1"/>
</dbReference>
<dbReference type="InterPro" id="IPR013785">
    <property type="entry name" value="Aldolase_TIM"/>
</dbReference>
<dbReference type="InterPro" id="IPR035990">
    <property type="entry name" value="TIM_sf"/>
</dbReference>
<dbReference type="InterPro" id="IPR022896">
    <property type="entry name" value="TrioseP_Isoase_bac/euk"/>
</dbReference>
<dbReference type="InterPro" id="IPR000652">
    <property type="entry name" value="Triosephosphate_isomerase"/>
</dbReference>
<dbReference type="InterPro" id="IPR020861">
    <property type="entry name" value="Triosephosphate_isomerase_AS"/>
</dbReference>
<dbReference type="NCBIfam" id="TIGR00419">
    <property type="entry name" value="tim"/>
    <property type="match status" value="1"/>
</dbReference>
<dbReference type="PANTHER" id="PTHR21139">
    <property type="entry name" value="TRIOSEPHOSPHATE ISOMERASE"/>
    <property type="match status" value="1"/>
</dbReference>
<dbReference type="PANTHER" id="PTHR21139:SF42">
    <property type="entry name" value="TRIOSEPHOSPHATE ISOMERASE"/>
    <property type="match status" value="1"/>
</dbReference>
<dbReference type="Pfam" id="PF00121">
    <property type="entry name" value="TIM"/>
    <property type="match status" value="1"/>
</dbReference>
<dbReference type="SUPFAM" id="SSF51351">
    <property type="entry name" value="Triosephosphate isomerase (TIM)"/>
    <property type="match status" value="1"/>
</dbReference>
<dbReference type="PROSITE" id="PS00171">
    <property type="entry name" value="TIM_1"/>
    <property type="match status" value="1"/>
</dbReference>
<dbReference type="PROSITE" id="PS51440">
    <property type="entry name" value="TIM_2"/>
    <property type="match status" value="1"/>
</dbReference>
<accession>Q88DV4</accession>
<proteinExistence type="inferred from homology"/>
<sequence>MRRPMVAGNWKMHGTRASVAELTKGLSNLALPSGVEVAVFPPALFINQVIDGLAGKEITVGAQNSAVQPEQGALTGEVAPEQLVEAGCKLVLIGHSERRQIIGETDEVLNRKFAAAQAKGLKPVLCIGETLEEREAGKTLEVVGRQLSSIIEAFGVKAFADAVIAYEPVWAIGTGLTATPQQAQDVHAAIRGQLAAEDAEVAAKVQLLYGGSVKAANAAELFGMPDIDGGLIGGASLNADEFGAICRAAGN</sequence>
<reference key="1">
    <citation type="journal article" date="2002" name="Environ. Microbiol.">
        <title>Complete genome sequence and comparative analysis of the metabolically versatile Pseudomonas putida KT2440.</title>
        <authorList>
            <person name="Nelson K.E."/>
            <person name="Weinel C."/>
            <person name="Paulsen I.T."/>
            <person name="Dodson R.J."/>
            <person name="Hilbert H."/>
            <person name="Martins dos Santos V.A.P."/>
            <person name="Fouts D.E."/>
            <person name="Gill S.R."/>
            <person name="Pop M."/>
            <person name="Holmes M."/>
            <person name="Brinkac L.M."/>
            <person name="Beanan M.J."/>
            <person name="DeBoy R.T."/>
            <person name="Daugherty S.C."/>
            <person name="Kolonay J.F."/>
            <person name="Madupu R."/>
            <person name="Nelson W.C."/>
            <person name="White O."/>
            <person name="Peterson J.D."/>
            <person name="Khouri H.M."/>
            <person name="Hance I."/>
            <person name="Chris Lee P."/>
            <person name="Holtzapple E.K."/>
            <person name="Scanlan D."/>
            <person name="Tran K."/>
            <person name="Moazzez A."/>
            <person name="Utterback T.R."/>
            <person name="Rizzo M."/>
            <person name="Lee K."/>
            <person name="Kosack D."/>
            <person name="Moestl D."/>
            <person name="Wedler H."/>
            <person name="Lauber J."/>
            <person name="Stjepandic D."/>
            <person name="Hoheisel J."/>
            <person name="Straetz M."/>
            <person name="Heim S."/>
            <person name="Kiewitz C."/>
            <person name="Eisen J.A."/>
            <person name="Timmis K.N."/>
            <person name="Duesterhoeft A."/>
            <person name="Tuemmler B."/>
            <person name="Fraser C.M."/>
        </authorList>
    </citation>
    <scope>NUCLEOTIDE SEQUENCE [LARGE SCALE GENOMIC DNA]</scope>
    <source>
        <strain>ATCC 47054 / DSM 6125 / CFBP 8728 / NCIMB 11950 / KT2440</strain>
    </source>
</reference>
<name>TPIS_PSEPK</name>
<protein>
    <recommendedName>
        <fullName evidence="1">Triosephosphate isomerase</fullName>
        <shortName evidence="1">TIM</shortName>
        <shortName evidence="1">TPI</shortName>
        <ecNumber evidence="1">5.3.1.1</ecNumber>
    </recommendedName>
    <alternativeName>
        <fullName evidence="1">Triose-phosphate isomerase</fullName>
    </alternativeName>
</protein>
<gene>
    <name evidence="1" type="primary">tpiA</name>
    <name type="ordered locus">PP_4715</name>
</gene>
<keyword id="KW-0963">Cytoplasm</keyword>
<keyword id="KW-0312">Gluconeogenesis</keyword>
<keyword id="KW-0324">Glycolysis</keyword>
<keyword id="KW-0413">Isomerase</keyword>
<keyword id="KW-1185">Reference proteome</keyword>
<feature type="chain" id="PRO_0000090269" description="Triosephosphate isomerase">
    <location>
        <begin position="1"/>
        <end position="251"/>
    </location>
</feature>
<feature type="active site" description="Electrophile" evidence="1">
    <location>
        <position position="95"/>
    </location>
</feature>
<feature type="active site" description="Proton acceptor" evidence="1">
    <location>
        <position position="167"/>
    </location>
</feature>
<feature type="binding site" evidence="1">
    <location>
        <begin position="9"/>
        <end position="11"/>
    </location>
    <ligand>
        <name>substrate</name>
    </ligand>
</feature>
<feature type="binding site" evidence="1">
    <location>
        <position position="173"/>
    </location>
    <ligand>
        <name>substrate</name>
    </ligand>
</feature>
<feature type="binding site" evidence="1">
    <location>
        <position position="212"/>
    </location>
    <ligand>
        <name>substrate</name>
    </ligand>
</feature>
<feature type="binding site" evidence="1">
    <location>
        <begin position="233"/>
        <end position="234"/>
    </location>
    <ligand>
        <name>substrate</name>
    </ligand>
</feature>
<comment type="function">
    <text evidence="1">Involved in the gluconeogenesis. Catalyzes stereospecifically the conversion of dihydroxyacetone phosphate (DHAP) to D-glyceraldehyde-3-phosphate (G3P).</text>
</comment>
<comment type="catalytic activity">
    <reaction evidence="1">
        <text>D-glyceraldehyde 3-phosphate = dihydroxyacetone phosphate</text>
        <dbReference type="Rhea" id="RHEA:18585"/>
        <dbReference type="ChEBI" id="CHEBI:57642"/>
        <dbReference type="ChEBI" id="CHEBI:59776"/>
        <dbReference type="EC" id="5.3.1.1"/>
    </reaction>
</comment>
<comment type="pathway">
    <text evidence="1">Carbohydrate biosynthesis; gluconeogenesis.</text>
</comment>
<comment type="pathway">
    <text evidence="1">Carbohydrate degradation; glycolysis; D-glyceraldehyde 3-phosphate from glycerone phosphate: step 1/1.</text>
</comment>
<comment type="subunit">
    <text evidence="1">Homodimer.</text>
</comment>
<comment type="subcellular location">
    <subcellularLocation>
        <location evidence="1">Cytoplasm</location>
    </subcellularLocation>
</comment>
<comment type="similarity">
    <text evidence="1">Belongs to the triosephosphate isomerase family.</text>
</comment>
<organism>
    <name type="scientific">Pseudomonas putida (strain ATCC 47054 / DSM 6125 / CFBP 8728 / NCIMB 11950 / KT2440)</name>
    <dbReference type="NCBI Taxonomy" id="160488"/>
    <lineage>
        <taxon>Bacteria</taxon>
        <taxon>Pseudomonadati</taxon>
        <taxon>Pseudomonadota</taxon>
        <taxon>Gammaproteobacteria</taxon>
        <taxon>Pseudomonadales</taxon>
        <taxon>Pseudomonadaceae</taxon>
        <taxon>Pseudomonas</taxon>
    </lineage>
</organism>